<proteinExistence type="evidence at protein level"/>
<organism>
    <name type="scientific">Homo sapiens</name>
    <name type="common">Human</name>
    <dbReference type="NCBI Taxonomy" id="9606"/>
    <lineage>
        <taxon>Eukaryota</taxon>
        <taxon>Metazoa</taxon>
        <taxon>Chordata</taxon>
        <taxon>Craniata</taxon>
        <taxon>Vertebrata</taxon>
        <taxon>Euteleostomi</taxon>
        <taxon>Mammalia</taxon>
        <taxon>Eutheria</taxon>
        <taxon>Euarchontoglires</taxon>
        <taxon>Primates</taxon>
        <taxon>Haplorrhini</taxon>
        <taxon>Catarrhini</taxon>
        <taxon>Hominidae</taxon>
        <taxon>Homo</taxon>
    </lineage>
</organism>
<keyword id="KW-0002">3D-structure</keyword>
<keyword id="KW-0025">Alternative splicing</keyword>
<keyword id="KW-0156">Chromatin regulator</keyword>
<keyword id="KW-0238">DNA-binding</keyword>
<keyword id="KW-1017">Isopeptide bond</keyword>
<keyword id="KW-0539">Nucleus</keyword>
<keyword id="KW-0597">Phosphoprotein</keyword>
<keyword id="KW-1267">Proteomics identification</keyword>
<keyword id="KW-1185">Reference proteome</keyword>
<keyword id="KW-0804">Transcription</keyword>
<keyword id="KW-0805">Transcription regulation</keyword>
<keyword id="KW-0832">Ubl conjugation</keyword>
<evidence type="ECO:0000250" key="1">
    <source>
        <dbReference type="UniProtKB" id="Q62481"/>
    </source>
</evidence>
<evidence type="ECO:0000255" key="2"/>
<evidence type="ECO:0000256" key="3">
    <source>
        <dbReference type="SAM" id="MobiDB-lite"/>
    </source>
</evidence>
<evidence type="ECO:0000269" key="4">
    <source>
    </source>
</evidence>
<evidence type="ECO:0000269" key="5">
    <source>
    </source>
</evidence>
<evidence type="ECO:0000269" key="6">
    <source>
    </source>
</evidence>
<evidence type="ECO:0000269" key="7">
    <source>
    </source>
</evidence>
<evidence type="ECO:0000303" key="8">
    <source>
    </source>
</evidence>
<evidence type="ECO:0000305" key="9"/>
<evidence type="ECO:0000305" key="10">
    <source>
    </source>
</evidence>
<evidence type="ECO:0007744" key="11">
    <source>
    </source>
</evidence>
<evidence type="ECO:0007744" key="12">
    <source>
    </source>
</evidence>
<evidence type="ECO:0007744" key="13">
    <source>
    </source>
</evidence>
<evidence type="ECO:0007829" key="14">
    <source>
        <dbReference type="PDB" id="5FUG"/>
    </source>
</evidence>
<evidence type="ECO:0007829" key="15">
    <source>
        <dbReference type="PDB" id="8XVT"/>
    </source>
</evidence>
<evidence type="ECO:0007829" key="16">
    <source>
        <dbReference type="PDB" id="9C57"/>
    </source>
</evidence>
<comment type="function">
    <text evidence="7">Deposition-and-exchange histone chaperone specific for H2AZ1, specifically chaperones H2AZ1 and deposits it into nucleosomes. As component of the SRCAP complex, mediates the ATP-dependent exchange of histone H2AZ1/H2B dimers for nucleosomal H2A/H2B, leading to transcriptional regulation of selected genes by chromatin remodeling.</text>
</comment>
<comment type="subunit">
    <text evidence="1 4 5 7">Component of the NuA4 histone acetyltransferase complex which contains the catalytic subunit KAT5/TIP60 and the subunits EP400, TRRAP/PAF400, BRD8/SMAP, EPC1, DMAP1/DNMAP1, RUVBL1/TIP49, RUVBL2, ING3, actin, ACTL6A/BAF53A, MORF4L1/MRG15, MORF4L2/MRGX, MRGBP, YEATS4/GAS41 and VPS72/YL1. Component of a NuA4-related complex which contains EP400, TRRAP/PAF400, SRCAP, BRD8/SMAP, EPC1, DMAP1/DNMAP1, RUVBL1/TIP49, RUVBL2, actin, ACTL6A/BAF53A, VPS72 and YEATS4/GAS41. Also part of a multiprotein complex which contains SRCAP and which binds to H2AZ1/H2AZ. Interacts (via N-terminal domain) with heterodimer H2BC11 and H2AZ1 (PubMed:26974126). The interaction with H2AZ1 is enhanced by VPS72 phosphorylation which is promoted by ZNHIT1 (By similarity).</text>
</comment>
<comment type="interaction">
    <interactant intactId="EBI-399189">
        <id>Q15906</id>
    </interactant>
    <interactant intactId="EBI-2549423">
        <id>Q6NT76</id>
        <label>HMBOX1</label>
    </interactant>
    <organismsDiffer>false</organismsDiffer>
    <experiments>3</experiments>
</comment>
<comment type="interaction">
    <interactant intactId="EBI-399189">
        <id>Q15906</id>
    </interactant>
    <interactant intactId="EBI-7116203">
        <id>O75031</id>
        <label>HSF2BP</label>
    </interactant>
    <organismsDiffer>false</organismsDiffer>
    <experiments>3</experiments>
</comment>
<comment type="interaction">
    <interactant intactId="EBI-399189">
        <id>Q15906</id>
    </interactant>
    <interactant intactId="EBI-724076">
        <id>Q99750</id>
        <label>MDFI</label>
    </interactant>
    <organismsDiffer>false</organismsDiffer>
    <experiments>4</experiments>
</comment>
<comment type="interaction">
    <interactant intactId="EBI-399189">
        <id>Q15906</id>
    </interactant>
    <interactant intactId="EBI-353675">
        <id>Q9Y265</id>
        <label>RUVBL1</label>
    </interactant>
    <organismsDiffer>false</organismsDiffer>
    <experiments>11</experiments>
</comment>
<comment type="subcellular location">
    <subcellularLocation>
        <location evidence="10">Nucleus</location>
    </subcellularLocation>
</comment>
<comment type="alternative products">
    <event type="alternative splicing"/>
    <isoform>
        <id>Q15906-1</id>
        <name>1</name>
        <sequence type="displayed"/>
    </isoform>
    <isoform>
        <id>Q15906-2</id>
        <name>2</name>
        <sequence type="described" ref="VSP_047566"/>
    </isoform>
</comment>
<comment type="PTM">
    <text evidence="1">Phosphorylation is enhanced by ZNHIT1 and promotes the interaction of VPS72 with histone H2AZ1.</text>
</comment>
<comment type="similarity">
    <text evidence="9">Belongs to the VPS72/YL1 family.</text>
</comment>
<reference key="1">
    <citation type="journal article" date="1995" name="Biochem. Biophys. Res. Commun.">
        <title>Molecular cloning of a novel human cDNA on chromosome 1q21 and its mouse homolog encoding a nuclear protein with DNA-binding ability.</title>
        <authorList>
            <person name="Horikawa I."/>
            <person name="Tanaka H."/>
            <person name="Yuasa Y."/>
            <person name="Suzuki M."/>
            <person name="Oshimura M."/>
        </authorList>
    </citation>
    <scope>NUCLEOTIDE SEQUENCE [MRNA] (ISOFORM 1)</scope>
    <source>
        <tissue>Fibroblast</tissue>
    </source>
</reference>
<reference key="2">
    <citation type="submission" date="2003-05" db="EMBL/GenBank/DDBJ databases">
        <title>Cloning of human full-length CDSs in BD Creator(TM) system donor vector.</title>
        <authorList>
            <person name="Kalnine N."/>
            <person name="Chen X."/>
            <person name="Rolfs A."/>
            <person name="Halleck A."/>
            <person name="Hines L."/>
            <person name="Eisenstein S."/>
            <person name="Koundinya M."/>
            <person name="Raphael J."/>
            <person name="Moreira D."/>
            <person name="Kelley T."/>
            <person name="LaBaer J."/>
            <person name="Lin Y."/>
            <person name="Phelan M."/>
            <person name="Farmer A."/>
        </authorList>
    </citation>
    <scope>NUCLEOTIDE SEQUENCE [LARGE SCALE MRNA] (ISOFORM 1)</scope>
</reference>
<reference key="3">
    <citation type="submission" date="2005-04" db="EMBL/GenBank/DDBJ databases">
        <authorList>
            <person name="Suzuki Y."/>
            <person name="Sugano S."/>
            <person name="Totoki Y."/>
            <person name="Toyoda A."/>
            <person name="Takeda T."/>
            <person name="Sakaki Y."/>
            <person name="Tanaka A."/>
            <person name="Yokoyama S."/>
        </authorList>
    </citation>
    <scope>NUCLEOTIDE SEQUENCE [LARGE SCALE MRNA] (ISOFORM 1)</scope>
    <source>
        <tissue>Kidney</tissue>
    </source>
</reference>
<reference key="4">
    <citation type="journal article" date="2006" name="Nature">
        <title>The DNA sequence and biological annotation of human chromosome 1.</title>
        <authorList>
            <person name="Gregory S.G."/>
            <person name="Barlow K.F."/>
            <person name="McLay K.E."/>
            <person name="Kaul R."/>
            <person name="Swarbreck D."/>
            <person name="Dunham A."/>
            <person name="Scott C.E."/>
            <person name="Howe K.L."/>
            <person name="Woodfine K."/>
            <person name="Spencer C.C.A."/>
            <person name="Jones M.C."/>
            <person name="Gillson C."/>
            <person name="Searle S."/>
            <person name="Zhou Y."/>
            <person name="Kokocinski F."/>
            <person name="McDonald L."/>
            <person name="Evans R."/>
            <person name="Phillips K."/>
            <person name="Atkinson A."/>
            <person name="Cooper R."/>
            <person name="Jones C."/>
            <person name="Hall R.E."/>
            <person name="Andrews T.D."/>
            <person name="Lloyd C."/>
            <person name="Ainscough R."/>
            <person name="Almeida J.P."/>
            <person name="Ambrose K.D."/>
            <person name="Anderson F."/>
            <person name="Andrew R.W."/>
            <person name="Ashwell R.I.S."/>
            <person name="Aubin K."/>
            <person name="Babbage A.K."/>
            <person name="Bagguley C.L."/>
            <person name="Bailey J."/>
            <person name="Beasley H."/>
            <person name="Bethel G."/>
            <person name="Bird C.P."/>
            <person name="Bray-Allen S."/>
            <person name="Brown J.Y."/>
            <person name="Brown A.J."/>
            <person name="Buckley D."/>
            <person name="Burton J."/>
            <person name="Bye J."/>
            <person name="Carder C."/>
            <person name="Chapman J.C."/>
            <person name="Clark S.Y."/>
            <person name="Clarke G."/>
            <person name="Clee C."/>
            <person name="Cobley V."/>
            <person name="Collier R.E."/>
            <person name="Corby N."/>
            <person name="Coville G.J."/>
            <person name="Davies J."/>
            <person name="Deadman R."/>
            <person name="Dunn M."/>
            <person name="Earthrowl M."/>
            <person name="Ellington A.G."/>
            <person name="Errington H."/>
            <person name="Frankish A."/>
            <person name="Frankland J."/>
            <person name="French L."/>
            <person name="Garner P."/>
            <person name="Garnett J."/>
            <person name="Gay L."/>
            <person name="Ghori M.R.J."/>
            <person name="Gibson R."/>
            <person name="Gilby L.M."/>
            <person name="Gillett W."/>
            <person name="Glithero R.J."/>
            <person name="Grafham D.V."/>
            <person name="Griffiths C."/>
            <person name="Griffiths-Jones S."/>
            <person name="Grocock R."/>
            <person name="Hammond S."/>
            <person name="Harrison E.S.I."/>
            <person name="Hart E."/>
            <person name="Haugen E."/>
            <person name="Heath P.D."/>
            <person name="Holmes S."/>
            <person name="Holt K."/>
            <person name="Howden P.J."/>
            <person name="Hunt A.R."/>
            <person name="Hunt S.E."/>
            <person name="Hunter G."/>
            <person name="Isherwood J."/>
            <person name="James R."/>
            <person name="Johnson C."/>
            <person name="Johnson D."/>
            <person name="Joy A."/>
            <person name="Kay M."/>
            <person name="Kershaw J.K."/>
            <person name="Kibukawa M."/>
            <person name="Kimberley A.M."/>
            <person name="King A."/>
            <person name="Knights A.J."/>
            <person name="Lad H."/>
            <person name="Laird G."/>
            <person name="Lawlor S."/>
            <person name="Leongamornlert D.A."/>
            <person name="Lloyd D.M."/>
            <person name="Loveland J."/>
            <person name="Lovell J."/>
            <person name="Lush M.J."/>
            <person name="Lyne R."/>
            <person name="Martin S."/>
            <person name="Mashreghi-Mohammadi M."/>
            <person name="Matthews L."/>
            <person name="Matthews N.S.W."/>
            <person name="McLaren S."/>
            <person name="Milne S."/>
            <person name="Mistry S."/>
            <person name="Moore M.J.F."/>
            <person name="Nickerson T."/>
            <person name="O'Dell C.N."/>
            <person name="Oliver K."/>
            <person name="Palmeiri A."/>
            <person name="Palmer S.A."/>
            <person name="Parker A."/>
            <person name="Patel D."/>
            <person name="Pearce A.V."/>
            <person name="Peck A.I."/>
            <person name="Pelan S."/>
            <person name="Phelps K."/>
            <person name="Phillimore B.J."/>
            <person name="Plumb R."/>
            <person name="Rajan J."/>
            <person name="Raymond C."/>
            <person name="Rouse G."/>
            <person name="Saenphimmachak C."/>
            <person name="Sehra H.K."/>
            <person name="Sheridan E."/>
            <person name="Shownkeen R."/>
            <person name="Sims S."/>
            <person name="Skuce C.D."/>
            <person name="Smith M."/>
            <person name="Steward C."/>
            <person name="Subramanian S."/>
            <person name="Sycamore N."/>
            <person name="Tracey A."/>
            <person name="Tromans A."/>
            <person name="Van Helmond Z."/>
            <person name="Wall M."/>
            <person name="Wallis J.M."/>
            <person name="White S."/>
            <person name="Whitehead S.L."/>
            <person name="Wilkinson J.E."/>
            <person name="Willey D.L."/>
            <person name="Williams H."/>
            <person name="Wilming L."/>
            <person name="Wray P.W."/>
            <person name="Wu Z."/>
            <person name="Coulson A."/>
            <person name="Vaudin M."/>
            <person name="Sulston J.E."/>
            <person name="Durbin R.M."/>
            <person name="Hubbard T."/>
            <person name="Wooster R."/>
            <person name="Dunham I."/>
            <person name="Carter N.P."/>
            <person name="McVean G."/>
            <person name="Ross M.T."/>
            <person name="Harrow J."/>
            <person name="Olson M.V."/>
            <person name="Beck S."/>
            <person name="Rogers J."/>
            <person name="Bentley D.R."/>
        </authorList>
    </citation>
    <scope>NUCLEOTIDE SEQUENCE [LARGE SCALE GENOMIC DNA]</scope>
</reference>
<reference key="5">
    <citation type="submission" date="2005-09" db="EMBL/GenBank/DDBJ databases">
        <authorList>
            <person name="Mural R.J."/>
            <person name="Istrail S."/>
            <person name="Sutton G.G."/>
            <person name="Florea L."/>
            <person name="Halpern A.L."/>
            <person name="Mobarry C.M."/>
            <person name="Lippert R."/>
            <person name="Walenz B."/>
            <person name="Shatkay H."/>
            <person name="Dew I."/>
            <person name="Miller J.R."/>
            <person name="Flanigan M.J."/>
            <person name="Edwards N.J."/>
            <person name="Bolanos R."/>
            <person name="Fasulo D."/>
            <person name="Halldorsson B.V."/>
            <person name="Hannenhalli S."/>
            <person name="Turner R."/>
            <person name="Yooseph S."/>
            <person name="Lu F."/>
            <person name="Nusskern D.R."/>
            <person name="Shue B.C."/>
            <person name="Zheng X.H."/>
            <person name="Zhong F."/>
            <person name="Delcher A.L."/>
            <person name="Huson D.H."/>
            <person name="Kravitz S.A."/>
            <person name="Mouchard L."/>
            <person name="Reinert K."/>
            <person name="Remington K.A."/>
            <person name="Clark A.G."/>
            <person name="Waterman M.S."/>
            <person name="Eichler E.E."/>
            <person name="Adams M.D."/>
            <person name="Hunkapiller M.W."/>
            <person name="Myers E.W."/>
            <person name="Venter J.C."/>
        </authorList>
    </citation>
    <scope>NUCLEOTIDE SEQUENCE [LARGE SCALE GENOMIC DNA]</scope>
</reference>
<reference key="6">
    <citation type="journal article" date="2004" name="Genome Res.">
        <title>The status, quality, and expansion of the NIH full-length cDNA project: the Mammalian Gene Collection (MGC).</title>
        <authorList>
            <consortium name="The MGC Project Team"/>
        </authorList>
    </citation>
    <scope>NUCLEOTIDE SEQUENCE [LARGE SCALE MRNA] (ISOFORM 1)</scope>
    <scope>NUCLEOTIDE SEQUENCE [LARGE SCALE MRNA] OF 1-258 (ISOFORM 2)</scope>
    <source>
        <tissue>Embryonic stem cell</tissue>
        <tissue>Kidney</tissue>
    </source>
</reference>
<reference key="7">
    <citation type="journal article" date="2004" name="Mol. Cell. Biol.">
        <title>Structural and functional conservation of the NuA4 histone acetyltransferase complex from yeast to humans.</title>
        <authorList>
            <person name="Doyon Y."/>
            <person name="Selleck W."/>
            <person name="Lane W.S."/>
            <person name="Tan S."/>
            <person name="Cote J."/>
        </authorList>
    </citation>
    <scope>IDENTIFICATION IN A NUA4-RELATED COMPLEX</scope>
</reference>
<reference key="8">
    <citation type="journal article" date="2005" name="J. Biol. Chem.">
        <title>The mammalian YL1 protein is a shared subunit of the TRRAP/TIP60 histone acetyltransferase and SRCAP complexes.</title>
        <authorList>
            <person name="Cai Y."/>
            <person name="Jin J."/>
            <person name="Florens L."/>
            <person name="Swanson S.K."/>
            <person name="Kusch T."/>
            <person name="Li B."/>
            <person name="Workman J.L."/>
            <person name="Washburn M.P."/>
            <person name="Conaway R.C."/>
            <person name="Conaway J.W."/>
        </authorList>
    </citation>
    <scope>SUBUNIT</scope>
</reference>
<reference key="9">
    <citation type="journal article" date="2013" name="J. Proteome Res.">
        <title>Toward a comprehensive characterization of a human cancer cell phosphoproteome.</title>
        <authorList>
            <person name="Zhou H."/>
            <person name="Di Palma S."/>
            <person name="Preisinger C."/>
            <person name="Peng M."/>
            <person name="Polat A.N."/>
            <person name="Heck A.J."/>
            <person name="Mohammed S."/>
        </authorList>
    </citation>
    <scope>PHOSPHORYLATION [LARGE SCALE ANALYSIS] AT SER-127 AND SER-129</scope>
    <scope>IDENTIFICATION BY MASS SPECTROMETRY [LARGE SCALE ANALYSIS]</scope>
    <source>
        <tissue>Cervix carcinoma</tissue>
        <tissue>Erythroleukemia</tissue>
    </source>
</reference>
<reference key="10">
    <citation type="journal article" date="2014" name="J. Proteomics">
        <title>An enzyme assisted RP-RPLC approach for in-depth analysis of human liver phosphoproteome.</title>
        <authorList>
            <person name="Bian Y."/>
            <person name="Song C."/>
            <person name="Cheng K."/>
            <person name="Dong M."/>
            <person name="Wang F."/>
            <person name="Huang J."/>
            <person name="Sun D."/>
            <person name="Wang L."/>
            <person name="Ye M."/>
            <person name="Zou H."/>
        </authorList>
    </citation>
    <scope>PHOSPHORYLATION [LARGE SCALE ANALYSIS] AT SER-127</scope>
    <scope>IDENTIFICATION BY MASS SPECTROMETRY [LARGE SCALE ANALYSIS]</scope>
    <source>
        <tissue>Liver</tissue>
    </source>
</reference>
<reference key="11">
    <citation type="journal article" date="2017" name="Nat. Struct. Mol. Biol.">
        <title>Site-specific mapping of the human SUMO proteome reveals co-modification with phosphorylation.</title>
        <authorList>
            <person name="Hendriks I.A."/>
            <person name="Lyon D."/>
            <person name="Young C."/>
            <person name="Jensen L.J."/>
            <person name="Vertegaal A.C."/>
            <person name="Nielsen M.L."/>
        </authorList>
    </citation>
    <scope>SUMOYLATION [LARGE SCALE ANALYSIS] AT LYS-115</scope>
    <scope>IDENTIFICATION BY MASS SPECTROMETRY [LARGE SCALE ANALYSIS]</scope>
</reference>
<reference key="12">
    <citation type="journal article" date="2016" name="Nat. Struct. Mol. Biol.">
        <title>Molecular basis and specificity of H2A.Z-H2B recognition and deposition by the histone chaperone YL1.</title>
        <authorList>
            <person name="Latrick C.M."/>
            <person name="Marek M."/>
            <person name="Ouararhni K."/>
            <person name="Papin C."/>
            <person name="Stoll I."/>
            <person name="Ignatyeva M."/>
            <person name="Obri A."/>
            <person name="Ennifar E."/>
            <person name="Dimitrov S."/>
            <person name="Romier C."/>
            <person name="Hamiche A."/>
        </authorList>
    </citation>
    <scope>X-RAY CRYSTALLOGRAPHY (2.70 ANGSTROMS) OF 6-69 IN COMPLEX WITH H2AZ1 AND H2BC11</scope>
    <scope>FUNCTION</scope>
    <scope>INTERACTION WITH H2AZ1 AND H2BC11</scope>
    <scope>MUTAGENESIS OF 29-PHE--PHE-37 AND 43-ASP--TYR-46</scope>
    <scope>SUBCELLULAR LOCATION</scope>
</reference>
<reference key="13">
    <citation type="journal article" date="2006" name="Science">
        <title>The consensus coding sequences of human breast and colorectal cancers.</title>
        <authorList>
            <person name="Sjoeblom T."/>
            <person name="Jones S."/>
            <person name="Wood L.D."/>
            <person name="Parsons D.W."/>
            <person name="Lin J."/>
            <person name="Barber T.D."/>
            <person name="Mandelker D."/>
            <person name="Leary R.J."/>
            <person name="Ptak J."/>
            <person name="Silliman N."/>
            <person name="Szabo S."/>
            <person name="Buckhaults P."/>
            <person name="Farrell C."/>
            <person name="Meeh P."/>
            <person name="Markowitz S.D."/>
            <person name="Willis J."/>
            <person name="Dawson D."/>
            <person name="Willson J.K.V."/>
            <person name="Gazdar A.F."/>
            <person name="Hartigan J."/>
            <person name="Wu L."/>
            <person name="Liu C."/>
            <person name="Parmigiani G."/>
            <person name="Park B.H."/>
            <person name="Bachman K.E."/>
            <person name="Papadopoulos N."/>
            <person name="Vogelstein B."/>
            <person name="Kinzler K.W."/>
            <person name="Velculescu V.E."/>
        </authorList>
    </citation>
    <scope>VARIANT [LARGE SCALE ANALYSIS] VAL-318</scope>
</reference>
<sequence length="364" mass="40594">MSLAGGRAPRKTAGNRLSGLLEAEEEDEFYQTTYGGFTEESGDDEYQGDQSDTEDEVDSDFDIDEGDEPSSDGEAEEPRRKRRVVTKAYKEPLKSLRPRKVNTPAGSSQKAREEKALLPLELQDDGSDSRKSMRQSTAEHTRQTFLRVQERQGQSRRRKGPHCERPLTQEELLREAKITEELNLRSLETYERLEADKKKQVHKKRKCPGPIITYHSVTVPLVGEPGPKEENVDIEGLDPAPSVSALTPHAGTGPVNPPARCSRTFITFSDDATFEEWFPQGRPPKVPVREVCPVTHRPALYRDPVTDIPYATARAFKIIREAYKKYITAHGLPPTASALGPGPPPPEPLPGSGPRALRQKIVIK</sequence>
<dbReference type="EMBL" id="D43642">
    <property type="protein sequence ID" value="BAA07757.1"/>
    <property type="molecule type" value="mRNA"/>
</dbReference>
<dbReference type="EMBL" id="BT019356">
    <property type="protein sequence ID" value="AAV38163.1"/>
    <property type="molecule type" value="mRNA"/>
</dbReference>
<dbReference type="EMBL" id="BT019357">
    <property type="protein sequence ID" value="AAV38164.1"/>
    <property type="molecule type" value="mRNA"/>
</dbReference>
<dbReference type="EMBL" id="AK222935">
    <property type="protein sequence ID" value="BAD96655.1"/>
    <property type="molecule type" value="mRNA"/>
</dbReference>
<dbReference type="EMBL" id="AK222939">
    <property type="protein sequence ID" value="BAD96659.1"/>
    <property type="molecule type" value="mRNA"/>
</dbReference>
<dbReference type="EMBL" id="AL592424">
    <property type="status" value="NOT_ANNOTATED_CDS"/>
    <property type="molecule type" value="Genomic_DNA"/>
</dbReference>
<dbReference type="EMBL" id="CH471121">
    <property type="protein sequence ID" value="EAW53462.1"/>
    <property type="molecule type" value="Genomic_DNA"/>
</dbReference>
<dbReference type="EMBL" id="BC003151">
    <property type="protein sequence ID" value="AAH03151.1"/>
    <property type="molecule type" value="mRNA"/>
</dbReference>
<dbReference type="EMBL" id="CX163016">
    <property type="status" value="NOT_ANNOTATED_CDS"/>
    <property type="molecule type" value="mRNA"/>
</dbReference>
<dbReference type="CCDS" id="CCDS59201.1">
    <molecule id="Q15906-2"/>
</dbReference>
<dbReference type="CCDS" id="CCDS989.1">
    <molecule id="Q15906-1"/>
</dbReference>
<dbReference type="PIR" id="JC4140">
    <property type="entry name" value="JC4140"/>
</dbReference>
<dbReference type="RefSeq" id="NP_001258016.1">
    <molecule id="Q15906-2"/>
    <property type="nucleotide sequence ID" value="NM_001271087.2"/>
</dbReference>
<dbReference type="RefSeq" id="NP_005988.1">
    <molecule id="Q15906-1"/>
    <property type="nucleotide sequence ID" value="NM_005997.3"/>
</dbReference>
<dbReference type="PDB" id="5FUG">
    <property type="method" value="X-ray"/>
    <property type="resolution" value="2.70 A"/>
    <property type="chains" value="C/F/I/L=6-69"/>
</dbReference>
<dbReference type="PDB" id="8QR1">
    <property type="method" value="EM"/>
    <property type="resolution" value="2.40 A"/>
    <property type="chains" value="S=1-364"/>
</dbReference>
<dbReference type="PDB" id="8X15">
    <property type="method" value="EM"/>
    <property type="resolution" value="3.20 A"/>
    <property type="chains" value="J=1-364"/>
</dbReference>
<dbReference type="PDB" id="8X19">
    <property type="method" value="EM"/>
    <property type="resolution" value="3.20 A"/>
    <property type="chains" value="J=1-364"/>
</dbReference>
<dbReference type="PDB" id="8X1C">
    <property type="method" value="EM"/>
    <property type="resolution" value="3.20 A"/>
    <property type="chains" value="J=1-364"/>
</dbReference>
<dbReference type="PDB" id="8XVG">
    <property type="method" value="EM"/>
    <property type="resolution" value="9.40 A"/>
    <property type="chains" value="N=1-364"/>
</dbReference>
<dbReference type="PDB" id="8XVT">
    <property type="method" value="EM"/>
    <property type="resolution" value="3.20 A"/>
    <property type="chains" value="N=1-364"/>
</dbReference>
<dbReference type="PDB" id="9C57">
    <property type="method" value="EM"/>
    <property type="resolution" value="2.75 A"/>
    <property type="chains" value="K=1-364"/>
</dbReference>
<dbReference type="PDB" id="9C62">
    <property type="method" value="EM"/>
    <property type="resolution" value="5.28 A"/>
    <property type="chains" value="K=1-364"/>
</dbReference>
<dbReference type="PDBsum" id="5FUG"/>
<dbReference type="PDBsum" id="8QR1"/>
<dbReference type="PDBsum" id="8X15"/>
<dbReference type="PDBsum" id="8X19"/>
<dbReference type="PDBsum" id="8X1C"/>
<dbReference type="PDBsum" id="8XVG"/>
<dbReference type="PDBsum" id="8XVT"/>
<dbReference type="PDBsum" id="9C57"/>
<dbReference type="PDBsum" id="9C62"/>
<dbReference type="EMDB" id="EMD-18581"/>
<dbReference type="EMDB" id="EMD-18591"/>
<dbReference type="EMDB" id="EMD-18597"/>
<dbReference type="EMDB" id="EMD-18598"/>
<dbReference type="EMDB" id="EMD-18611"/>
<dbReference type="EMDB" id="EMD-18794"/>
<dbReference type="EMDB" id="EMD-37984"/>
<dbReference type="EMDB" id="EMD-37988"/>
<dbReference type="EMDB" id="EMD-37990"/>
<dbReference type="EMDB" id="EMD-38703"/>
<dbReference type="EMDB" id="EMD-38718"/>
<dbReference type="EMDB" id="EMD-45206"/>
<dbReference type="EMDB" id="EMD-45240"/>
<dbReference type="SMR" id="Q15906"/>
<dbReference type="BioGRID" id="112804">
    <property type="interactions" value="150"/>
</dbReference>
<dbReference type="ComplexPortal" id="CPX-974">
    <property type="entry name" value="SRCAP chromatin remodeling complex"/>
</dbReference>
<dbReference type="ComplexPortal" id="CPX-978">
    <property type="entry name" value="NuA4 histone acetyltransferase complex"/>
</dbReference>
<dbReference type="CORUM" id="Q15906"/>
<dbReference type="DIP" id="DIP-31767N"/>
<dbReference type="FunCoup" id="Q15906">
    <property type="interactions" value="2688"/>
</dbReference>
<dbReference type="IntAct" id="Q15906">
    <property type="interactions" value="93"/>
</dbReference>
<dbReference type="MINT" id="Q15906"/>
<dbReference type="STRING" id="9606.ENSP00000346464"/>
<dbReference type="GlyGen" id="Q15906">
    <property type="glycosylation" value="1 site, 1 O-linked glycan (1 site)"/>
</dbReference>
<dbReference type="iPTMnet" id="Q15906"/>
<dbReference type="PhosphoSitePlus" id="Q15906"/>
<dbReference type="SwissPalm" id="Q15906"/>
<dbReference type="BioMuta" id="VPS72"/>
<dbReference type="DMDM" id="2499159"/>
<dbReference type="jPOST" id="Q15906"/>
<dbReference type="MassIVE" id="Q15906"/>
<dbReference type="PaxDb" id="9606-ENSP00000346464"/>
<dbReference type="PeptideAtlas" id="Q15906"/>
<dbReference type="ProteomicsDB" id="1732"/>
<dbReference type="ProteomicsDB" id="60807">
    <molecule id="Q15906-1"/>
</dbReference>
<dbReference type="Pumba" id="Q15906"/>
<dbReference type="Antibodypedia" id="20319">
    <property type="antibodies" value="180 antibodies from 31 providers"/>
</dbReference>
<dbReference type="DNASU" id="6944"/>
<dbReference type="Ensembl" id="ENST00000354473.4">
    <molecule id="Q15906-2"/>
    <property type="protein sequence ID" value="ENSP00000346464.4"/>
    <property type="gene ID" value="ENSG00000163159.15"/>
</dbReference>
<dbReference type="Ensembl" id="ENST00000368892.9">
    <molecule id="Q15906-1"/>
    <property type="protein sequence ID" value="ENSP00000357887.5"/>
    <property type="gene ID" value="ENSG00000163159.15"/>
</dbReference>
<dbReference type="GeneID" id="6944"/>
<dbReference type="KEGG" id="hsa:6944"/>
<dbReference type="MANE-Select" id="ENST00000368892.9">
    <property type="protein sequence ID" value="ENSP00000357887.5"/>
    <property type="RefSeq nucleotide sequence ID" value="NM_005997.3"/>
    <property type="RefSeq protein sequence ID" value="NP_005988.1"/>
</dbReference>
<dbReference type="UCSC" id="uc001exe.3">
    <molecule id="Q15906-1"/>
    <property type="organism name" value="human"/>
</dbReference>
<dbReference type="AGR" id="HGNC:11644"/>
<dbReference type="CTD" id="6944"/>
<dbReference type="DisGeNET" id="6944"/>
<dbReference type="GeneCards" id="VPS72"/>
<dbReference type="HGNC" id="HGNC:11644">
    <property type="gene designation" value="VPS72"/>
</dbReference>
<dbReference type="HPA" id="ENSG00000163159">
    <property type="expression patterns" value="Low tissue specificity"/>
</dbReference>
<dbReference type="MIM" id="600607">
    <property type="type" value="gene"/>
</dbReference>
<dbReference type="neXtProt" id="NX_Q15906"/>
<dbReference type="OpenTargets" id="ENSG00000163159"/>
<dbReference type="PharmGKB" id="PA36396"/>
<dbReference type="VEuPathDB" id="HostDB:ENSG00000163159"/>
<dbReference type="eggNOG" id="KOG2897">
    <property type="taxonomic scope" value="Eukaryota"/>
</dbReference>
<dbReference type="GeneTree" id="ENSGT00390000017503"/>
<dbReference type="HOGENOM" id="CLU_040862_0_0_1"/>
<dbReference type="InParanoid" id="Q15906"/>
<dbReference type="OMA" id="TGPTIRY"/>
<dbReference type="OrthoDB" id="78296at2759"/>
<dbReference type="PAN-GO" id="Q15906">
    <property type="GO annotations" value="2 GO annotations based on evolutionary models"/>
</dbReference>
<dbReference type="PhylomeDB" id="Q15906"/>
<dbReference type="TreeFam" id="TF314532"/>
<dbReference type="PathwayCommons" id="Q15906"/>
<dbReference type="Reactome" id="R-HSA-3214847">
    <property type="pathway name" value="HATs acetylate histones"/>
</dbReference>
<dbReference type="SignaLink" id="Q15906"/>
<dbReference type="SIGNOR" id="Q15906"/>
<dbReference type="BioGRID-ORCS" id="6944">
    <property type="hits" value="349 hits in 1178 CRISPR screens"/>
</dbReference>
<dbReference type="ChiTaRS" id="VPS72">
    <property type="organism name" value="human"/>
</dbReference>
<dbReference type="GeneWiki" id="VPS72"/>
<dbReference type="GenomeRNAi" id="6944"/>
<dbReference type="Pharos" id="Q15906">
    <property type="development level" value="Tbio"/>
</dbReference>
<dbReference type="PRO" id="PR:Q15906"/>
<dbReference type="Proteomes" id="UP000005640">
    <property type="component" value="Chromosome 1"/>
</dbReference>
<dbReference type="RNAct" id="Q15906">
    <property type="molecule type" value="protein"/>
</dbReference>
<dbReference type="Bgee" id="ENSG00000163159">
    <property type="expression patterns" value="Expressed in secondary oocyte and 208 other cell types or tissues"/>
</dbReference>
<dbReference type="ExpressionAtlas" id="Q15906">
    <property type="expression patterns" value="baseline and differential"/>
</dbReference>
<dbReference type="GO" id="GO:0035267">
    <property type="term" value="C:NuA4 histone acetyltransferase complex"/>
    <property type="evidence" value="ECO:0000314"/>
    <property type="project" value="ComplexPortal"/>
</dbReference>
<dbReference type="GO" id="GO:0016607">
    <property type="term" value="C:nuclear speck"/>
    <property type="evidence" value="ECO:0000314"/>
    <property type="project" value="HPA"/>
</dbReference>
<dbReference type="GO" id="GO:0005654">
    <property type="term" value="C:nucleoplasm"/>
    <property type="evidence" value="ECO:0000304"/>
    <property type="project" value="Reactome"/>
</dbReference>
<dbReference type="GO" id="GO:0000786">
    <property type="term" value="C:nucleosome"/>
    <property type="evidence" value="ECO:0000314"/>
    <property type="project" value="ComplexPortal"/>
</dbReference>
<dbReference type="GO" id="GO:0005634">
    <property type="term" value="C:nucleus"/>
    <property type="evidence" value="ECO:0000318"/>
    <property type="project" value="GO_Central"/>
</dbReference>
<dbReference type="GO" id="GO:0032991">
    <property type="term" value="C:protein-containing complex"/>
    <property type="evidence" value="ECO:0000314"/>
    <property type="project" value="UniProtKB"/>
</dbReference>
<dbReference type="GO" id="GO:0003677">
    <property type="term" value="F:DNA binding"/>
    <property type="evidence" value="ECO:0007669"/>
    <property type="project" value="UniProtKB-KW"/>
</dbReference>
<dbReference type="GO" id="GO:0042393">
    <property type="term" value="F:histone binding"/>
    <property type="evidence" value="ECO:0000353"/>
    <property type="project" value="UniProtKB"/>
</dbReference>
<dbReference type="GO" id="GO:0140713">
    <property type="term" value="F:histone chaperone activity"/>
    <property type="evidence" value="ECO:0000315"/>
    <property type="project" value="UniProtKB"/>
</dbReference>
<dbReference type="GO" id="GO:0006338">
    <property type="term" value="P:chromatin remodeling"/>
    <property type="evidence" value="ECO:0000303"/>
    <property type="project" value="ComplexPortal"/>
</dbReference>
<dbReference type="GO" id="GO:0000122">
    <property type="term" value="P:negative regulation of transcription by RNA polymerase II"/>
    <property type="evidence" value="ECO:0000304"/>
    <property type="project" value="ProtInc"/>
</dbReference>
<dbReference type="GO" id="GO:0045893">
    <property type="term" value="P:positive regulation of DNA-templated transcription"/>
    <property type="evidence" value="ECO:0000303"/>
    <property type="project" value="ComplexPortal"/>
</dbReference>
<dbReference type="GO" id="GO:1905168">
    <property type="term" value="P:positive regulation of double-strand break repair via homologous recombination"/>
    <property type="evidence" value="ECO:0000314"/>
    <property type="project" value="ComplexPortal"/>
</dbReference>
<dbReference type="GO" id="GO:0042981">
    <property type="term" value="P:regulation of apoptotic process"/>
    <property type="evidence" value="ECO:0000303"/>
    <property type="project" value="ComplexPortal"/>
</dbReference>
<dbReference type="GO" id="GO:0051726">
    <property type="term" value="P:regulation of cell cycle"/>
    <property type="evidence" value="ECO:0000315"/>
    <property type="project" value="ComplexPortal"/>
</dbReference>
<dbReference type="GO" id="GO:0006355">
    <property type="term" value="P:regulation of DNA-templated transcription"/>
    <property type="evidence" value="ECO:0000303"/>
    <property type="project" value="ComplexPortal"/>
</dbReference>
<dbReference type="GO" id="GO:2000779">
    <property type="term" value="P:regulation of double-strand break repair"/>
    <property type="evidence" value="ECO:0000303"/>
    <property type="project" value="ComplexPortal"/>
</dbReference>
<dbReference type="GO" id="GO:0035019">
    <property type="term" value="P:somatic stem cell population maintenance"/>
    <property type="evidence" value="ECO:0007669"/>
    <property type="project" value="Ensembl"/>
</dbReference>
<dbReference type="GO" id="GO:0045815">
    <property type="term" value="P:transcription initiation-coupled chromatin remodeling"/>
    <property type="evidence" value="ECO:0000315"/>
    <property type="project" value="UniProtKB"/>
</dbReference>
<dbReference type="InterPro" id="IPR013272">
    <property type="entry name" value="Vps72/YL1_C"/>
</dbReference>
<dbReference type="InterPro" id="IPR046757">
    <property type="entry name" value="YL1_N"/>
</dbReference>
<dbReference type="PANTHER" id="PTHR13275:SF4">
    <property type="entry name" value="VACUOLAR PROTEIN SORTING-ASSOCIATED PROTEIN 72 HOMOLOG"/>
    <property type="match status" value="1"/>
</dbReference>
<dbReference type="PANTHER" id="PTHR13275">
    <property type="entry name" value="YL-1 PROTEIN TRANSCRIPTION FACTOR-LIKE 1"/>
    <property type="match status" value="1"/>
</dbReference>
<dbReference type="Pfam" id="PF05764">
    <property type="entry name" value="YL1"/>
    <property type="match status" value="1"/>
</dbReference>
<dbReference type="Pfam" id="PF08265">
    <property type="entry name" value="YL1_C"/>
    <property type="match status" value="1"/>
</dbReference>
<dbReference type="SMART" id="SM00993">
    <property type="entry name" value="YL1_C"/>
    <property type="match status" value="1"/>
</dbReference>
<feature type="chain" id="PRO_0000066283" description="Vacuolar protein sorting-associated protein 72 homolog">
    <location>
        <begin position="1"/>
        <end position="364"/>
    </location>
</feature>
<feature type="DNA-binding region" evidence="2">
    <location>
        <begin position="156"/>
        <end position="206"/>
    </location>
</feature>
<feature type="region of interest" description="Disordered" evidence="3">
    <location>
        <begin position="1"/>
        <end position="165"/>
    </location>
</feature>
<feature type="region of interest" description="Disordered" evidence="3">
    <location>
        <begin position="335"/>
        <end position="357"/>
    </location>
</feature>
<feature type="compositionally biased region" description="Acidic residues" evidence="3">
    <location>
        <begin position="40"/>
        <end position="75"/>
    </location>
</feature>
<feature type="compositionally biased region" description="Basic and acidic residues" evidence="3">
    <location>
        <begin position="127"/>
        <end position="142"/>
    </location>
</feature>
<feature type="compositionally biased region" description="Pro residues" evidence="3">
    <location>
        <begin position="341"/>
        <end position="351"/>
    </location>
</feature>
<feature type="modified residue" description="Phosphoserine" evidence="11 12">
    <location>
        <position position="127"/>
    </location>
</feature>
<feature type="modified residue" description="Phosphoserine" evidence="11">
    <location>
        <position position="129"/>
    </location>
</feature>
<feature type="cross-link" description="Glycyl lysine isopeptide (Lys-Gly) (interchain with G-Cter in SUMO2)" evidence="13">
    <location>
        <position position="115"/>
    </location>
</feature>
<feature type="splice variant" id="VSP_047566" description="In isoform 2." evidence="8">
    <original>G</original>
    <variation>GSLCFSLSFVLR</variation>
    <location>
        <position position="236"/>
    </location>
</feature>
<feature type="sequence variant" id="VAR_035803" description="In a breast cancer sample; somatic mutation; dbSNP:rs1182821166." evidence="6">
    <original>I</original>
    <variation>V</variation>
    <location>
        <position position="318"/>
    </location>
</feature>
<feature type="mutagenesis site" description="Highly decreases interaction with H2AZ1 and H2BC11. Abolishes interaction with H2AZ1 and H2BC11 and exchange of H2A for H2AZ1 in nucleosomes; when associated with A-43--46-A." evidence="7">
    <original>FYQTTYGGF</original>
    <variation>AAQTTAGGA</variation>
    <location>
        <begin position="29"/>
        <end position="37"/>
    </location>
</feature>
<feature type="mutagenesis site" description="Almost abolishes interaction with H2AZ1 and H2BC11. Abolishes interaction with H2AZ1 and H2BC11 and exchange of H2A for H2AZ1 in nucleosomes; when associated with A-29--37-A." evidence="7">
    <original>DDEY</original>
    <variation>ADAA</variation>
    <location>
        <begin position="43"/>
        <end position="46"/>
    </location>
</feature>
<feature type="sequence conflict" description="In Ref. 3; BAD96655/BAD96659." evidence="9" ref="3">
    <original>Y</original>
    <variation>H</variation>
    <location>
        <position position="30"/>
    </location>
</feature>
<feature type="sequence conflict" description="In Ref. 3; BAD96655/BAD96659." evidence="9" ref="3">
    <original>T</original>
    <variation>I</variation>
    <location>
        <position position="53"/>
    </location>
</feature>
<feature type="turn" evidence="14">
    <location>
        <begin position="11"/>
        <end position="16"/>
    </location>
</feature>
<feature type="helix" evidence="14">
    <location>
        <begin position="17"/>
        <end position="22"/>
    </location>
</feature>
<feature type="helix" evidence="14">
    <location>
        <begin position="29"/>
        <end position="32"/>
    </location>
</feature>
<feature type="helix" evidence="14">
    <location>
        <begin position="33"/>
        <end position="35"/>
    </location>
</feature>
<feature type="strand" evidence="14">
    <location>
        <begin position="54"/>
        <end position="57"/>
    </location>
</feature>
<feature type="helix" evidence="16">
    <location>
        <begin position="169"/>
        <end position="184"/>
    </location>
</feature>
<feature type="strand" evidence="16">
    <location>
        <begin position="189"/>
        <end position="191"/>
    </location>
</feature>
<feature type="helix" evidence="15">
    <location>
        <begin position="196"/>
        <end position="206"/>
    </location>
</feature>
<feature type="strand" evidence="16">
    <location>
        <begin position="212"/>
        <end position="218"/>
    </location>
</feature>
<feature type="strand" evidence="16">
    <location>
        <begin position="262"/>
        <end position="270"/>
    </location>
</feature>
<feature type="helix" evidence="16">
    <location>
        <begin position="271"/>
        <end position="277"/>
    </location>
</feature>
<feature type="turn" evidence="16">
    <location>
        <begin position="293"/>
        <end position="295"/>
    </location>
</feature>
<feature type="strand" evidence="16">
    <location>
        <begin position="304"/>
        <end position="306"/>
    </location>
</feature>
<feature type="strand" evidence="16">
    <location>
        <begin position="309"/>
        <end position="312"/>
    </location>
</feature>
<feature type="helix" evidence="16">
    <location>
        <begin position="313"/>
        <end position="329"/>
    </location>
</feature>
<name>VPS72_HUMAN</name>
<accession>Q15906</accession>
<accession>A6NLK9</accession>
<accession>A6PW55</accession>
<accession>Q53GJ2</accession>
<accession>Q5U0R4</accession>
<protein>
    <recommendedName>
        <fullName>Vacuolar protein sorting-associated protein 72 homolog</fullName>
    </recommendedName>
    <alternativeName>
        <fullName>Protein YL-1</fullName>
    </alternativeName>
    <alternativeName>
        <fullName>Transcription factor-like 1</fullName>
    </alternativeName>
</protein>
<gene>
    <name type="primary">VPS72</name>
    <name type="synonym">TCFL1</name>
    <name type="synonym">YL1</name>
</gene>